<name>PSN2_DANRE</name>
<gene>
    <name type="primary">psen2</name>
</gene>
<keyword id="KW-0256">Endoplasmic reticulum</keyword>
<keyword id="KW-0333">Golgi apparatus</keyword>
<keyword id="KW-0378">Hydrolase</keyword>
<keyword id="KW-0472">Membrane</keyword>
<keyword id="KW-0914">Notch signaling pathway</keyword>
<keyword id="KW-0645">Protease</keyword>
<keyword id="KW-1185">Reference proteome</keyword>
<keyword id="KW-0812">Transmembrane</keyword>
<keyword id="KW-1133">Transmembrane helix</keyword>
<organism>
    <name type="scientific">Danio rerio</name>
    <name type="common">Zebrafish</name>
    <name type="synonym">Brachydanio rerio</name>
    <dbReference type="NCBI Taxonomy" id="7955"/>
    <lineage>
        <taxon>Eukaryota</taxon>
        <taxon>Metazoa</taxon>
        <taxon>Chordata</taxon>
        <taxon>Craniata</taxon>
        <taxon>Vertebrata</taxon>
        <taxon>Euteleostomi</taxon>
        <taxon>Actinopterygii</taxon>
        <taxon>Neopterygii</taxon>
        <taxon>Teleostei</taxon>
        <taxon>Ostariophysi</taxon>
        <taxon>Cypriniformes</taxon>
        <taxon>Danionidae</taxon>
        <taxon>Danioninae</taxon>
        <taxon>Danio</taxon>
    </lineage>
</organism>
<protein>
    <recommendedName>
        <fullName>Presenilin-2</fullName>
        <shortName>PS-2</shortName>
        <shortName>Zf-PS2</shortName>
        <ecNumber>3.4.23.-</ecNumber>
    </recommendedName>
    <alternativeName>
        <fullName>Pre2</fullName>
    </alternativeName>
</protein>
<reference key="1">
    <citation type="journal article" date="2002" name="Dev. Genes Evol.">
        <title>Identification of a second presenilin gene in zebrafish with similarity to the human Alzheimer's disease gene presenilin2.</title>
        <authorList>
            <person name="Groth C."/>
            <person name="Nornes S."/>
            <person name="McCarty R."/>
            <person name="Tamme R."/>
            <person name="Lardelli M."/>
        </authorList>
    </citation>
    <scope>NUCLEOTIDE SEQUENCE [MRNA]</scope>
    <scope>TISSUE SPECIFICITY</scope>
</reference>
<reference key="2">
    <citation type="submission" date="1999-08" db="EMBL/GenBank/DDBJ databases">
        <title>The cloning and function of ps2 in zebrafish.</title>
        <authorList>
            <person name="Jiang Y.-J."/>
            <person name="Davies A."/>
            <person name="Lewis J."/>
        </authorList>
    </citation>
    <scope>NUCLEOTIDE SEQUENCE [MRNA]</scope>
</reference>
<dbReference type="EC" id="3.4.23.-"/>
<dbReference type="EMBL" id="AJ271795">
    <property type="protein sequence ID" value="CAB71930.1"/>
    <property type="molecule type" value="mRNA"/>
</dbReference>
<dbReference type="EMBL" id="AF178539">
    <property type="protein sequence ID" value="AAK61828.1"/>
    <property type="molecule type" value="mRNA"/>
</dbReference>
<dbReference type="RefSeq" id="NP_571589.2">
    <property type="nucleotide sequence ID" value="NM_131514.2"/>
</dbReference>
<dbReference type="SMR" id="Q90ZE4"/>
<dbReference type="FunCoup" id="Q90ZE4">
    <property type="interactions" value="454"/>
</dbReference>
<dbReference type="STRING" id="7955.ENSDARP00000011791"/>
<dbReference type="MEROPS" id="A22.002"/>
<dbReference type="PaxDb" id="7955-ENSDARP00000011791"/>
<dbReference type="Ensembl" id="ENSDART00000006381">
    <property type="protein sequence ID" value="ENSDARP00000011791"/>
    <property type="gene ID" value="ENSDARG00000015540"/>
</dbReference>
<dbReference type="GeneID" id="58026"/>
<dbReference type="KEGG" id="dre:58026"/>
<dbReference type="AGR" id="ZFIN:ZDB-GENE-000330-9"/>
<dbReference type="CTD" id="5664"/>
<dbReference type="ZFIN" id="ZDB-GENE-000330-9">
    <property type="gene designation" value="psen2"/>
</dbReference>
<dbReference type="eggNOG" id="KOG2736">
    <property type="taxonomic scope" value="Eukaryota"/>
</dbReference>
<dbReference type="HOGENOM" id="CLU_022975_3_1_1"/>
<dbReference type="InParanoid" id="Q90ZE4"/>
<dbReference type="OMA" id="TTNLMMF"/>
<dbReference type="OrthoDB" id="20287at2759"/>
<dbReference type="PhylomeDB" id="Q90ZE4"/>
<dbReference type="TreeFam" id="TF315040"/>
<dbReference type="Reactome" id="R-DRE-1251985">
    <property type="pathway name" value="Nuclear signaling by ERBB4"/>
</dbReference>
<dbReference type="Reactome" id="R-DRE-193692">
    <property type="pathway name" value="Regulated proteolysis of p75NTR"/>
</dbReference>
<dbReference type="Reactome" id="R-DRE-3928665">
    <property type="pathway name" value="EPH-ephrin mediated repulsion of cells"/>
</dbReference>
<dbReference type="Reactome" id="R-DRE-9839383">
    <property type="pathway name" value="TGFBR3 PTM regulation"/>
</dbReference>
<dbReference type="PRO" id="PR:Q90ZE4"/>
<dbReference type="Proteomes" id="UP000000437">
    <property type="component" value="Chromosome 1"/>
</dbReference>
<dbReference type="Bgee" id="ENSDARG00000015540">
    <property type="expression patterns" value="Expressed in intestine and 29 other cell types or tissues"/>
</dbReference>
<dbReference type="GO" id="GO:1904115">
    <property type="term" value="C:axon cytoplasm"/>
    <property type="evidence" value="ECO:0007669"/>
    <property type="project" value="GOC"/>
</dbReference>
<dbReference type="GO" id="GO:0005789">
    <property type="term" value="C:endoplasmic reticulum membrane"/>
    <property type="evidence" value="ECO:0007669"/>
    <property type="project" value="UniProtKB-SubCell"/>
</dbReference>
<dbReference type="GO" id="GO:0070765">
    <property type="term" value="C:gamma-secretase complex"/>
    <property type="evidence" value="ECO:0000318"/>
    <property type="project" value="GO_Central"/>
</dbReference>
<dbReference type="GO" id="GO:0000139">
    <property type="term" value="C:Golgi membrane"/>
    <property type="evidence" value="ECO:0007669"/>
    <property type="project" value="UniProtKB-SubCell"/>
</dbReference>
<dbReference type="GO" id="GO:0042500">
    <property type="term" value="F:aspartic endopeptidase activity, intramembrane cleaving"/>
    <property type="evidence" value="ECO:0000318"/>
    <property type="project" value="GO_Central"/>
</dbReference>
<dbReference type="GO" id="GO:0034205">
    <property type="term" value="P:amyloid-beta formation"/>
    <property type="evidence" value="ECO:0000315"/>
    <property type="project" value="ZFIN"/>
</dbReference>
<dbReference type="GO" id="GO:0019896">
    <property type="term" value="P:axonal transport of mitochondrion"/>
    <property type="evidence" value="ECO:0000315"/>
    <property type="project" value="ZFIN"/>
</dbReference>
<dbReference type="GO" id="GO:0007420">
    <property type="term" value="P:brain development"/>
    <property type="evidence" value="ECO:0000315"/>
    <property type="project" value="ZFIN"/>
</dbReference>
<dbReference type="GO" id="GO:0055074">
    <property type="term" value="P:calcium ion homeostasis"/>
    <property type="evidence" value="ECO:0000318"/>
    <property type="project" value="GO_Central"/>
</dbReference>
<dbReference type="GO" id="GO:0030318">
    <property type="term" value="P:melanocyte differentiation"/>
    <property type="evidence" value="ECO:0000315"/>
    <property type="project" value="ZFIN"/>
</dbReference>
<dbReference type="GO" id="GO:0006509">
    <property type="term" value="P:membrane protein ectodomain proteolysis"/>
    <property type="evidence" value="ECO:0000318"/>
    <property type="project" value="GO_Central"/>
</dbReference>
<dbReference type="GO" id="GO:0022008">
    <property type="term" value="P:neurogenesis"/>
    <property type="evidence" value="ECO:0000315"/>
    <property type="project" value="ZFIN"/>
</dbReference>
<dbReference type="GO" id="GO:0007219">
    <property type="term" value="P:Notch signaling pathway"/>
    <property type="evidence" value="ECO:0000315"/>
    <property type="project" value="ZFIN"/>
</dbReference>
<dbReference type="GO" id="GO:0016485">
    <property type="term" value="P:protein processing"/>
    <property type="evidence" value="ECO:0000318"/>
    <property type="project" value="GO_Central"/>
</dbReference>
<dbReference type="GO" id="GO:0010506">
    <property type="term" value="P:regulation of autophagy"/>
    <property type="evidence" value="ECO:0000315"/>
    <property type="project" value="ZFIN"/>
</dbReference>
<dbReference type="GO" id="GO:0061053">
    <property type="term" value="P:somite development"/>
    <property type="evidence" value="ECO:0000315"/>
    <property type="project" value="ZFIN"/>
</dbReference>
<dbReference type="GO" id="GO:0001964">
    <property type="term" value="P:startle response"/>
    <property type="evidence" value="ECO:0000315"/>
    <property type="project" value="ZFIN"/>
</dbReference>
<dbReference type="FunFam" id="1.10.472.100:FF:000001">
    <property type="entry name" value="Presenilin"/>
    <property type="match status" value="1"/>
</dbReference>
<dbReference type="Gene3D" id="1.10.472.100">
    <property type="entry name" value="Presenilin"/>
    <property type="match status" value="1"/>
</dbReference>
<dbReference type="InterPro" id="IPR001108">
    <property type="entry name" value="Peptidase_A22A"/>
</dbReference>
<dbReference type="InterPro" id="IPR006639">
    <property type="entry name" value="Preselin/SPP"/>
</dbReference>
<dbReference type="InterPro" id="IPR042524">
    <property type="entry name" value="Presenilin_C"/>
</dbReference>
<dbReference type="PANTHER" id="PTHR10202">
    <property type="entry name" value="PRESENILIN"/>
    <property type="match status" value="1"/>
</dbReference>
<dbReference type="PANTHER" id="PTHR10202:SF24">
    <property type="entry name" value="PRESENILIN-2"/>
    <property type="match status" value="1"/>
</dbReference>
<dbReference type="Pfam" id="PF01080">
    <property type="entry name" value="Presenilin"/>
    <property type="match status" value="2"/>
</dbReference>
<dbReference type="PRINTS" id="PR01072">
    <property type="entry name" value="PRESENILIN"/>
</dbReference>
<dbReference type="SMART" id="SM00730">
    <property type="entry name" value="PSN"/>
    <property type="match status" value="1"/>
</dbReference>
<comment type="function">
    <text evidence="1">Probable catalytic subunit of the gamma-secretase complex, an endoprotease complex that catalyzes the intramembrane cleavage of integral membrane proteins such as Notch receptors.</text>
</comment>
<comment type="subunit">
    <text evidence="4">Homodimer. Component of the gamma-secretase complex, a complex composed of a presenilin homodimer (PSEN1 or PSEN2), nicastrin, APH1 and PEN2 (Probable).</text>
</comment>
<comment type="subcellular location">
    <subcellularLocation>
        <location evidence="1">Endoplasmic reticulum membrane</location>
        <topology evidence="1">Multi-pass membrane protein</topology>
    </subcellularLocation>
    <subcellularLocation>
        <location evidence="1">Golgi apparatus membrane</location>
        <topology evidence="1">Multi-pass membrane protein</topology>
    </subcellularLocation>
</comment>
<comment type="developmental stage">
    <text>Protein expression is initiated from 6 and 12 hours of embryonic development.</text>
</comment>
<comment type="domain">
    <text evidence="1">The PAL motif is required for normal active site conformation.</text>
</comment>
<comment type="miscellaneous">
    <text>While the protein appears only from 6 hours of development, the transcript is maternally derived and ubiquitously expressed during early embryonic development, suggesting that its translation is strictly regulated.</text>
</comment>
<comment type="similarity">
    <text evidence="4">Belongs to the peptidase A22A family.</text>
</comment>
<accession>Q90ZE4</accession>
<accession>Q9I991</accession>
<proteinExistence type="evidence at transcript level"/>
<feature type="chain" id="PRO_0000073899" description="Presenilin-2">
    <location>
        <begin position="1"/>
        <end position="441"/>
    </location>
</feature>
<feature type="topological domain" description="Cytoplasmic" evidence="2">
    <location>
        <begin position="1"/>
        <end position="85"/>
    </location>
</feature>
<feature type="transmembrane region" description="Helical" evidence="2">
    <location>
        <begin position="86"/>
        <end position="106"/>
    </location>
</feature>
<feature type="topological domain" description="Lumenal" evidence="2">
    <location>
        <begin position="107"/>
        <end position="137"/>
    </location>
</feature>
<feature type="transmembrane region" description="Helical" evidence="2">
    <location>
        <begin position="138"/>
        <end position="158"/>
    </location>
</feature>
<feature type="topological domain" description="Cytoplasmic" evidence="2">
    <location>
        <begin position="159"/>
        <end position="165"/>
    </location>
</feature>
<feature type="transmembrane region" description="Helical" evidence="2">
    <location>
        <begin position="166"/>
        <end position="186"/>
    </location>
</feature>
<feature type="topological domain" description="Lumenal" evidence="2">
    <location>
        <begin position="187"/>
        <end position="199"/>
    </location>
</feature>
<feature type="transmembrane region" description="Helical" evidence="2">
    <location>
        <begin position="200"/>
        <end position="220"/>
    </location>
</feature>
<feature type="topological domain" description="Cytoplasmic" evidence="2">
    <location>
        <begin position="221"/>
        <end position="225"/>
    </location>
</feature>
<feature type="transmembrane region" description="Helical" evidence="2">
    <location>
        <begin position="226"/>
        <end position="246"/>
    </location>
</feature>
<feature type="topological domain" description="Lumenal" evidence="2">
    <location>
        <begin position="247"/>
        <end position="248"/>
    </location>
</feature>
<feature type="transmembrane region" description="Helical" evidence="2">
    <location>
        <begin position="249"/>
        <end position="269"/>
    </location>
</feature>
<feature type="topological domain" description="Cytoplasmic" evidence="2">
    <location>
        <begin position="270"/>
        <end position="355"/>
    </location>
</feature>
<feature type="transmembrane region" description="Helical" evidence="2">
    <location>
        <begin position="356"/>
        <end position="376"/>
    </location>
</feature>
<feature type="topological domain" description="Lumenal" evidence="2">
    <location>
        <begin position="377"/>
        <end position="381"/>
    </location>
</feature>
<feature type="transmembrane region" description="Helical" evidence="2">
    <location>
        <begin position="382"/>
        <end position="402"/>
    </location>
</feature>
<feature type="topological domain" description="Cytoplasmic" evidence="2">
    <location>
        <begin position="403"/>
        <end position="406"/>
    </location>
</feature>
<feature type="intramembrane region" description="Helical" evidence="2">
    <location>
        <begin position="407"/>
        <end position="427"/>
    </location>
</feature>
<feature type="topological domain" description="Cytoplasmic" evidence="2">
    <location>
        <begin position="428"/>
        <end position="441"/>
    </location>
</feature>
<feature type="region of interest" description="Disordered" evidence="3">
    <location>
        <begin position="1"/>
        <end position="74"/>
    </location>
</feature>
<feature type="region of interest" description="Disordered" evidence="3">
    <location>
        <begin position="308"/>
        <end position="346"/>
    </location>
</feature>
<feature type="short sequence motif" description="PAL">
    <location>
        <begin position="407"/>
        <end position="409"/>
    </location>
</feature>
<feature type="compositionally biased region" description="Acidic residues" evidence="3">
    <location>
        <begin position="1"/>
        <end position="10"/>
    </location>
</feature>
<feature type="compositionally biased region" description="Polar residues" evidence="3">
    <location>
        <begin position="17"/>
        <end position="39"/>
    </location>
</feature>
<feature type="compositionally biased region" description="Low complexity" evidence="3">
    <location>
        <begin position="45"/>
        <end position="60"/>
    </location>
</feature>
<feature type="active site" evidence="1">
    <location>
        <position position="262"/>
    </location>
</feature>
<feature type="active site" evidence="1">
    <location>
        <position position="360"/>
    </location>
</feature>
<feature type="sequence conflict" description="In Ref. 2; AAK61828." evidence="4" ref="2">
    <original>L</original>
    <variation>V</variation>
    <location>
        <position position="204"/>
    </location>
</feature>
<feature type="sequence conflict" description="In Ref. 2; AAK61828." evidence="4" ref="2">
    <original>H</original>
    <variation>D</variation>
    <location>
        <position position="332"/>
    </location>
</feature>
<evidence type="ECO:0000250" key="1"/>
<evidence type="ECO:0000255" key="2"/>
<evidence type="ECO:0000256" key="3">
    <source>
        <dbReference type="SAM" id="MobiDB-lite"/>
    </source>
</evidence>
<evidence type="ECO:0000305" key="4"/>
<sequence>MNTSDSEEDSYNERSALVQSESPTVPSYNQDNAMSLPQDTDSKRSGAVRSRSASGSGDAGPVDRERADTPDGEEEELTLKYGAKHVIMLFIPVTLCMVVVVATIKSVSFYTEKSGQRLIYTPFEEDPNSVGQRLLNSVLNTLVMISVIVFMTIILVLLYKYRCYKFIHGWLILSSLMLLFWFSFMYLGEVFKTYNVAMDYPTLLMIIWNFGVVGMICIHWKGPLRLQQAYLIVISALMALIFIKYLPEWSAWVILGAISIYDLIAVLCPKGPLRMLVETAQERNEPIFPALIYSSAMVWMVGMADSNNPDSAGERRRSGGGVRTQEGVESEHDAPQAGRRQYSAEEDLEEDRGVKLGLGDFIFYSVLVGKAAATGGDWNTTLACFVAILIGLCLTLLLLAIFKKALPALPISITFGLVFYFSTDNLVRPFMDSLAAHQYYI</sequence>